<gene>
    <name type="primary">pnn1</name>
    <name type="ORF">SPAC26F1.02</name>
</gene>
<feature type="chain" id="PRO_0000116620" description="Pinin homolog 1">
    <location>
        <begin position="1"/>
        <end position="197"/>
    </location>
</feature>
<feature type="region of interest" description="Disordered" evidence="2">
    <location>
        <begin position="30"/>
        <end position="73"/>
    </location>
</feature>
<feature type="compositionally biased region" description="Basic and acidic residues" evidence="2">
    <location>
        <begin position="34"/>
        <end position="43"/>
    </location>
</feature>
<feature type="compositionally biased region" description="Basic and acidic residues" evidence="2">
    <location>
        <begin position="53"/>
        <end position="71"/>
    </location>
</feature>
<protein>
    <recommendedName>
        <fullName>Pinin homolog 1</fullName>
    </recommendedName>
</protein>
<name>PNN1_SCHPO</name>
<evidence type="ECO:0000250" key="1"/>
<evidence type="ECO:0000256" key="2">
    <source>
        <dbReference type="SAM" id="MobiDB-lite"/>
    </source>
</evidence>
<evidence type="ECO:0000269" key="3">
    <source>
    </source>
</evidence>
<evidence type="ECO:0000305" key="4"/>
<accession>Q10492</accession>
<dbReference type="EMBL" id="CU329670">
    <property type="protein sequence ID" value="CAA97359.1"/>
    <property type="molecule type" value="Genomic_DNA"/>
</dbReference>
<dbReference type="PIR" id="T38418">
    <property type="entry name" value="T38418"/>
</dbReference>
<dbReference type="RefSeq" id="NP_594893.1">
    <property type="nucleotide sequence ID" value="NM_001020322.2"/>
</dbReference>
<dbReference type="BioGRID" id="278564">
    <property type="interactions" value="11"/>
</dbReference>
<dbReference type="STRING" id="284812.Q10492"/>
<dbReference type="SwissPalm" id="Q10492"/>
<dbReference type="PaxDb" id="4896-SPAC26F1.02.1"/>
<dbReference type="EnsemblFungi" id="SPAC26F1.02.1">
    <property type="protein sequence ID" value="SPAC26F1.02.1:pep"/>
    <property type="gene ID" value="SPAC26F1.02"/>
</dbReference>
<dbReference type="GeneID" id="2542087"/>
<dbReference type="KEGG" id="spo:2542087"/>
<dbReference type="PomBase" id="SPAC26F1.02">
    <property type="gene designation" value="pnn1"/>
</dbReference>
<dbReference type="VEuPathDB" id="FungiDB:SPAC26F1.02"/>
<dbReference type="eggNOG" id="KOG3756">
    <property type="taxonomic scope" value="Eukaryota"/>
</dbReference>
<dbReference type="HOGENOM" id="CLU_1475956_0_0_1"/>
<dbReference type="InParanoid" id="Q10492"/>
<dbReference type="OMA" id="NEDSHME"/>
<dbReference type="PhylomeDB" id="Q10492"/>
<dbReference type="PRO" id="PR:Q10492"/>
<dbReference type="Proteomes" id="UP000002485">
    <property type="component" value="Chromosome I"/>
</dbReference>
<dbReference type="GO" id="GO:0005829">
    <property type="term" value="C:cytosol"/>
    <property type="evidence" value="ECO:0007005"/>
    <property type="project" value="PomBase"/>
</dbReference>
<dbReference type="GO" id="GO:0005634">
    <property type="term" value="C:nucleus"/>
    <property type="evidence" value="ECO:0007005"/>
    <property type="project" value="PomBase"/>
</dbReference>
<dbReference type="GO" id="GO:0005681">
    <property type="term" value="C:spliceosomal complex"/>
    <property type="evidence" value="ECO:0000250"/>
    <property type="project" value="PomBase"/>
</dbReference>
<dbReference type="GO" id="GO:0006397">
    <property type="term" value="P:mRNA processing"/>
    <property type="evidence" value="ECO:0007669"/>
    <property type="project" value="UniProtKB-KW"/>
</dbReference>
<dbReference type="GO" id="GO:0071030">
    <property type="term" value="P:nuclear mRNA surveillance of spliceosomal pre-mRNA splicing"/>
    <property type="evidence" value="ECO:0000303"/>
    <property type="project" value="PomBase"/>
</dbReference>
<dbReference type="GO" id="GO:0008380">
    <property type="term" value="P:RNA splicing"/>
    <property type="evidence" value="ECO:0007669"/>
    <property type="project" value="UniProtKB-KW"/>
</dbReference>
<dbReference type="InterPro" id="IPR039853">
    <property type="entry name" value="Pinin"/>
</dbReference>
<dbReference type="InterPro" id="IPR006786">
    <property type="entry name" value="Pinin_SDK_MemA"/>
</dbReference>
<dbReference type="PANTHER" id="PTHR12707:SF0">
    <property type="entry name" value="PININ"/>
    <property type="match status" value="1"/>
</dbReference>
<dbReference type="PANTHER" id="PTHR12707">
    <property type="entry name" value="PINN"/>
    <property type="match status" value="1"/>
</dbReference>
<dbReference type="Pfam" id="PF04696">
    <property type="entry name" value="Pinin_SDK_memA"/>
    <property type="match status" value="1"/>
</dbReference>
<keyword id="KW-0963">Cytoplasm</keyword>
<keyword id="KW-0507">mRNA processing</keyword>
<keyword id="KW-0508">mRNA splicing</keyword>
<keyword id="KW-0539">Nucleus</keyword>
<keyword id="KW-1185">Reference proteome</keyword>
<keyword id="KW-0804">Transcription</keyword>
<keyword id="KW-0805">Transcription regulation</keyword>
<reference key="1">
    <citation type="journal article" date="2002" name="Nature">
        <title>The genome sequence of Schizosaccharomyces pombe.</title>
        <authorList>
            <person name="Wood V."/>
            <person name="Gwilliam R."/>
            <person name="Rajandream M.A."/>
            <person name="Lyne M.H."/>
            <person name="Lyne R."/>
            <person name="Stewart A."/>
            <person name="Sgouros J.G."/>
            <person name="Peat N."/>
            <person name="Hayles J."/>
            <person name="Baker S.G."/>
            <person name="Basham D."/>
            <person name="Bowman S."/>
            <person name="Brooks K."/>
            <person name="Brown D."/>
            <person name="Brown S."/>
            <person name="Chillingworth T."/>
            <person name="Churcher C.M."/>
            <person name="Collins M."/>
            <person name="Connor R."/>
            <person name="Cronin A."/>
            <person name="Davis P."/>
            <person name="Feltwell T."/>
            <person name="Fraser A."/>
            <person name="Gentles S."/>
            <person name="Goble A."/>
            <person name="Hamlin N."/>
            <person name="Harris D.E."/>
            <person name="Hidalgo J."/>
            <person name="Hodgson G."/>
            <person name="Holroyd S."/>
            <person name="Hornsby T."/>
            <person name="Howarth S."/>
            <person name="Huckle E.J."/>
            <person name="Hunt S."/>
            <person name="Jagels K."/>
            <person name="James K.D."/>
            <person name="Jones L."/>
            <person name="Jones M."/>
            <person name="Leather S."/>
            <person name="McDonald S."/>
            <person name="McLean J."/>
            <person name="Mooney P."/>
            <person name="Moule S."/>
            <person name="Mungall K.L."/>
            <person name="Murphy L.D."/>
            <person name="Niblett D."/>
            <person name="Odell C."/>
            <person name="Oliver K."/>
            <person name="O'Neil S."/>
            <person name="Pearson D."/>
            <person name="Quail M.A."/>
            <person name="Rabbinowitsch E."/>
            <person name="Rutherford K.M."/>
            <person name="Rutter S."/>
            <person name="Saunders D."/>
            <person name="Seeger K."/>
            <person name="Sharp S."/>
            <person name="Skelton J."/>
            <person name="Simmonds M.N."/>
            <person name="Squares R."/>
            <person name="Squares S."/>
            <person name="Stevens K."/>
            <person name="Taylor K."/>
            <person name="Taylor R.G."/>
            <person name="Tivey A."/>
            <person name="Walsh S.V."/>
            <person name="Warren T."/>
            <person name="Whitehead S."/>
            <person name="Woodward J.R."/>
            <person name="Volckaert G."/>
            <person name="Aert R."/>
            <person name="Robben J."/>
            <person name="Grymonprez B."/>
            <person name="Weltjens I."/>
            <person name="Vanstreels E."/>
            <person name="Rieger M."/>
            <person name="Schaefer M."/>
            <person name="Mueller-Auer S."/>
            <person name="Gabel C."/>
            <person name="Fuchs M."/>
            <person name="Duesterhoeft A."/>
            <person name="Fritzc C."/>
            <person name="Holzer E."/>
            <person name="Moestl D."/>
            <person name="Hilbert H."/>
            <person name="Borzym K."/>
            <person name="Langer I."/>
            <person name="Beck A."/>
            <person name="Lehrach H."/>
            <person name="Reinhardt R."/>
            <person name="Pohl T.M."/>
            <person name="Eger P."/>
            <person name="Zimmermann W."/>
            <person name="Wedler H."/>
            <person name="Wambutt R."/>
            <person name="Purnelle B."/>
            <person name="Goffeau A."/>
            <person name="Cadieu E."/>
            <person name="Dreano S."/>
            <person name="Gloux S."/>
            <person name="Lelaure V."/>
            <person name="Mottier S."/>
            <person name="Galibert F."/>
            <person name="Aves S.J."/>
            <person name="Xiang Z."/>
            <person name="Hunt C."/>
            <person name="Moore K."/>
            <person name="Hurst S.M."/>
            <person name="Lucas M."/>
            <person name="Rochet M."/>
            <person name="Gaillardin C."/>
            <person name="Tallada V.A."/>
            <person name="Garzon A."/>
            <person name="Thode G."/>
            <person name="Daga R.R."/>
            <person name="Cruzado L."/>
            <person name="Jimenez J."/>
            <person name="Sanchez M."/>
            <person name="del Rey F."/>
            <person name="Benito J."/>
            <person name="Dominguez A."/>
            <person name="Revuelta J.L."/>
            <person name="Moreno S."/>
            <person name="Armstrong J."/>
            <person name="Forsburg S.L."/>
            <person name="Cerutti L."/>
            <person name="Lowe T."/>
            <person name="McCombie W.R."/>
            <person name="Paulsen I."/>
            <person name="Potashkin J."/>
            <person name="Shpakovski G.V."/>
            <person name="Ussery D."/>
            <person name="Barrell B.G."/>
            <person name="Nurse P."/>
        </authorList>
    </citation>
    <scope>NUCLEOTIDE SEQUENCE [LARGE SCALE GENOMIC DNA]</scope>
    <source>
        <strain>972 / ATCC 24843</strain>
    </source>
</reference>
<reference key="2">
    <citation type="journal article" date="2006" name="Nat. Biotechnol.">
        <title>ORFeome cloning and global analysis of protein localization in the fission yeast Schizosaccharomyces pombe.</title>
        <authorList>
            <person name="Matsuyama A."/>
            <person name="Arai R."/>
            <person name="Yashiroda Y."/>
            <person name="Shirai A."/>
            <person name="Kamata A."/>
            <person name="Sekido S."/>
            <person name="Kobayashi Y."/>
            <person name="Hashimoto A."/>
            <person name="Hamamoto M."/>
            <person name="Hiraoka Y."/>
            <person name="Horinouchi S."/>
            <person name="Yoshida M."/>
        </authorList>
    </citation>
    <scope>SUBCELLULAR LOCATION [LARGE SCALE ANALYSIS]</scope>
</reference>
<organism>
    <name type="scientific">Schizosaccharomyces pombe (strain 972 / ATCC 24843)</name>
    <name type="common">Fission yeast</name>
    <dbReference type="NCBI Taxonomy" id="284812"/>
    <lineage>
        <taxon>Eukaryota</taxon>
        <taxon>Fungi</taxon>
        <taxon>Dikarya</taxon>
        <taxon>Ascomycota</taxon>
        <taxon>Taphrinomycotina</taxon>
        <taxon>Schizosaccharomycetes</taxon>
        <taxon>Schizosaccharomycetales</taxon>
        <taxon>Schizosaccharomycetaceae</taxon>
        <taxon>Schizosaccharomyces</taxon>
    </lineage>
</organism>
<sequence>MKILAMDERREELSAKSTVQNVKISEAPILDGKVNNEDSHMEIDQPEGSMEEDDHRQVKEKNTSENSVEQKRGRRMFGALLGTLGKFQQESEREQKSARKVKRAELEEKLAKRREQELQELEKQEKIEAEILESRLQEQRKVALDELELDRNDLKKVLDNKKSYYLRTKTQPSLFYRPYYLLPSQRTQLEQMKSEAP</sequence>
<proteinExistence type="inferred from homology"/>
<comment type="function">
    <text evidence="1">Transcriptional activator that may participate in the regulation of mRNA splicing.</text>
</comment>
<comment type="subcellular location">
    <subcellularLocation>
        <location evidence="3">Nucleus</location>
    </subcellularLocation>
    <subcellularLocation>
        <location evidence="3">Cytoplasm</location>
    </subcellularLocation>
</comment>
<comment type="similarity">
    <text evidence="4">Belongs to the pinin family.</text>
</comment>